<comment type="similarity">
    <text evidence="1">Belongs to the universal ribosomal protein uL29 family.</text>
</comment>
<organism>
    <name type="scientific">Buchnera aphidicola subsp. Acyrthosiphon kondoi</name>
    <name type="common">Acyrthosiphon kondoi symbiotic bacterium</name>
    <dbReference type="NCBI Taxonomy" id="42474"/>
    <lineage>
        <taxon>Bacteria</taxon>
        <taxon>Pseudomonadati</taxon>
        <taxon>Pseudomonadota</taxon>
        <taxon>Gammaproteobacteria</taxon>
        <taxon>Enterobacterales</taxon>
        <taxon>Erwiniaceae</taxon>
        <taxon>Buchnera</taxon>
    </lineage>
</organism>
<name>RL29_BUCAK</name>
<reference key="1">
    <citation type="journal article" date="1994" name="DNA Res.">
        <title>Cloning and characterization of the ribosomal protein genes in the spc operon of a prokaryotic endosymbiont of the pea aphid, Acyrthosiphon kondoi.</title>
        <authorList>
            <person name="Abe R."/>
            <person name="Yamashita A."/>
            <person name="Isono K."/>
        </authorList>
    </citation>
    <scope>NUCLEOTIDE SEQUENCE [GENOMIC DNA]</scope>
    <source>
        <strain>Kurashiki</strain>
    </source>
</reference>
<sequence length="63" mass="7257">MKAQELREKGVEELNTELLNLLREQFNLRMQGASGQLQQTHLLKQVRRNVARVKTLLTEKAGV</sequence>
<dbReference type="EMBL" id="D31786">
    <property type="protein sequence ID" value="BAA06583.1"/>
    <property type="molecule type" value="Genomic_DNA"/>
</dbReference>
<dbReference type="SMR" id="P46174"/>
<dbReference type="GO" id="GO:0022625">
    <property type="term" value="C:cytosolic large ribosomal subunit"/>
    <property type="evidence" value="ECO:0007669"/>
    <property type="project" value="TreeGrafter"/>
</dbReference>
<dbReference type="GO" id="GO:0003735">
    <property type="term" value="F:structural constituent of ribosome"/>
    <property type="evidence" value="ECO:0007669"/>
    <property type="project" value="InterPro"/>
</dbReference>
<dbReference type="GO" id="GO:0006412">
    <property type="term" value="P:translation"/>
    <property type="evidence" value="ECO:0007669"/>
    <property type="project" value="UniProtKB-UniRule"/>
</dbReference>
<dbReference type="CDD" id="cd00427">
    <property type="entry name" value="Ribosomal_L29_HIP"/>
    <property type="match status" value="1"/>
</dbReference>
<dbReference type="FunFam" id="1.10.287.310:FF:000001">
    <property type="entry name" value="50S ribosomal protein L29"/>
    <property type="match status" value="1"/>
</dbReference>
<dbReference type="Gene3D" id="6.10.140.1970">
    <property type="match status" value="1"/>
</dbReference>
<dbReference type="HAMAP" id="MF_00374">
    <property type="entry name" value="Ribosomal_uL29"/>
    <property type="match status" value="1"/>
</dbReference>
<dbReference type="InterPro" id="IPR050063">
    <property type="entry name" value="Ribosomal_protein_uL29"/>
</dbReference>
<dbReference type="InterPro" id="IPR001854">
    <property type="entry name" value="Ribosomal_uL29"/>
</dbReference>
<dbReference type="InterPro" id="IPR018254">
    <property type="entry name" value="Ribosomal_uL29_CS"/>
</dbReference>
<dbReference type="InterPro" id="IPR036049">
    <property type="entry name" value="Ribosomal_uL29_sf"/>
</dbReference>
<dbReference type="NCBIfam" id="TIGR00012">
    <property type="entry name" value="L29"/>
    <property type="match status" value="1"/>
</dbReference>
<dbReference type="PANTHER" id="PTHR10916">
    <property type="entry name" value="60S RIBOSOMAL PROTEIN L35/50S RIBOSOMAL PROTEIN L29"/>
    <property type="match status" value="1"/>
</dbReference>
<dbReference type="PANTHER" id="PTHR10916:SF0">
    <property type="entry name" value="LARGE RIBOSOMAL SUBUNIT PROTEIN UL29C"/>
    <property type="match status" value="1"/>
</dbReference>
<dbReference type="Pfam" id="PF00831">
    <property type="entry name" value="Ribosomal_L29"/>
    <property type="match status" value="1"/>
</dbReference>
<dbReference type="SUPFAM" id="SSF46561">
    <property type="entry name" value="Ribosomal protein L29 (L29p)"/>
    <property type="match status" value="1"/>
</dbReference>
<dbReference type="PROSITE" id="PS00579">
    <property type="entry name" value="RIBOSOMAL_L29"/>
    <property type="match status" value="1"/>
</dbReference>
<gene>
    <name type="primary">rpmC</name>
</gene>
<protein>
    <recommendedName>
        <fullName evidence="1">Large ribosomal subunit protein uL29</fullName>
    </recommendedName>
    <alternativeName>
        <fullName>50S ribosomal protein L29</fullName>
    </alternativeName>
</protein>
<evidence type="ECO:0000305" key="1"/>
<proteinExistence type="inferred from homology"/>
<feature type="chain" id="PRO_0000130364" description="Large ribosomal subunit protein uL29">
    <location>
        <begin position="1"/>
        <end position="63"/>
    </location>
</feature>
<keyword id="KW-0687">Ribonucleoprotein</keyword>
<keyword id="KW-0689">Ribosomal protein</keyword>
<accession>P46174</accession>